<sequence>MNAVAKIEQHNPIGTDGFEFVEFTAPDAKGIEQLRQLFNMMGFTETAKHRSKEVFLFQQNDINIVLNGSPTGHVHEFALKHGPSACAMAFRVKNASQAAAYAESQGAKLVGSHANFGELNIPSLEGIGGSLLYLVDRYGDRSIYDVDFEFIEGRSANDNSVGLTYIDHLTHNVKRGQMDVWSGFYERIANFREIRYFDIEGKLTGLFSRAMTAPCGKIRIPINESADDTSQIEEFIREYHGEGIQHIALTTDDIYATVRKLRDNGVKFMSTPDTYYEKVDTRVAGHGEPLEQLRELNLLIDGAPGDDGILLQIFTDTVIGPIFFEIIQRKGNQGFGEGNFKALFESIEEDQIRRGVI</sequence>
<evidence type="ECO:0000250" key="1"/>
<evidence type="ECO:0000255" key="2">
    <source>
        <dbReference type="PROSITE-ProRule" id="PRU01163"/>
    </source>
</evidence>
<evidence type="ECO:0000305" key="3"/>
<feature type="chain" id="PRO_0000287741" description="4-hydroxyphenylpyruvate dioxygenase">
    <location>
        <begin position="1"/>
        <end position="357"/>
    </location>
</feature>
<feature type="domain" description="VOC 1" evidence="2">
    <location>
        <begin position="17"/>
        <end position="137"/>
    </location>
</feature>
<feature type="domain" description="VOC 2" evidence="2">
    <location>
        <begin position="165"/>
        <end position="316"/>
    </location>
</feature>
<feature type="binding site" evidence="1">
    <location>
        <position position="168"/>
    </location>
    <ligand>
        <name>Fe cation</name>
        <dbReference type="ChEBI" id="CHEBI:24875"/>
    </ligand>
</feature>
<feature type="binding site" evidence="1">
    <location>
        <position position="246"/>
    </location>
    <ligand>
        <name>Fe cation</name>
        <dbReference type="ChEBI" id="CHEBI:24875"/>
    </ligand>
</feature>
<feature type="binding site" evidence="1">
    <location>
        <position position="325"/>
    </location>
    <ligand>
        <name>Fe cation</name>
        <dbReference type="ChEBI" id="CHEBI:24875"/>
    </ligand>
</feature>
<accession>Q9I576</accession>
<name>HPPD_PSEAE</name>
<comment type="catalytic activity">
    <reaction>
        <text>3-(4-hydroxyphenyl)pyruvate + O2 = homogentisate + CO2</text>
        <dbReference type="Rhea" id="RHEA:16189"/>
        <dbReference type="ChEBI" id="CHEBI:15379"/>
        <dbReference type="ChEBI" id="CHEBI:16169"/>
        <dbReference type="ChEBI" id="CHEBI:16526"/>
        <dbReference type="ChEBI" id="CHEBI:36242"/>
        <dbReference type="EC" id="1.13.11.27"/>
    </reaction>
</comment>
<comment type="cofactor">
    <cofactor evidence="1">
        <name>Fe cation</name>
        <dbReference type="ChEBI" id="CHEBI:24875"/>
    </cofactor>
    <text evidence="1">Binds 1 Fe cation per subunit.</text>
</comment>
<comment type="pathway">
    <text>Amino-acid degradation; L-phenylalanine degradation; acetoacetate and fumarate from L-phenylalanine: step 3/6.</text>
</comment>
<comment type="subunit">
    <text evidence="1">Homotetramer.</text>
</comment>
<comment type="similarity">
    <text evidence="3">Belongs to the 4HPPD family.</text>
</comment>
<keyword id="KW-0223">Dioxygenase</keyword>
<keyword id="KW-0408">Iron</keyword>
<keyword id="KW-0479">Metal-binding</keyword>
<keyword id="KW-0560">Oxidoreductase</keyword>
<keyword id="KW-0585">Phenylalanine catabolism</keyword>
<keyword id="KW-1185">Reference proteome</keyword>
<keyword id="KW-0677">Repeat</keyword>
<keyword id="KW-0828">Tyrosine catabolism</keyword>
<gene>
    <name type="primary">hpd</name>
    <name type="ordered locus">PA0865</name>
</gene>
<proteinExistence type="inferred from homology"/>
<protein>
    <recommendedName>
        <fullName>4-hydroxyphenylpyruvate dioxygenase</fullName>
        <shortName>4HPPD</shortName>
        <shortName>HPD</shortName>
        <shortName>HPPDase</shortName>
        <ecNumber>1.13.11.27</ecNumber>
    </recommendedName>
</protein>
<organism>
    <name type="scientific">Pseudomonas aeruginosa (strain ATCC 15692 / DSM 22644 / CIP 104116 / JCM 14847 / LMG 12228 / 1C / PRS 101 / PAO1)</name>
    <dbReference type="NCBI Taxonomy" id="208964"/>
    <lineage>
        <taxon>Bacteria</taxon>
        <taxon>Pseudomonadati</taxon>
        <taxon>Pseudomonadota</taxon>
        <taxon>Gammaproteobacteria</taxon>
        <taxon>Pseudomonadales</taxon>
        <taxon>Pseudomonadaceae</taxon>
        <taxon>Pseudomonas</taxon>
    </lineage>
</organism>
<dbReference type="EC" id="1.13.11.27"/>
<dbReference type="EMBL" id="AE004091">
    <property type="protein sequence ID" value="AAG04254.1"/>
    <property type="molecule type" value="Genomic_DNA"/>
</dbReference>
<dbReference type="PIR" id="F83537">
    <property type="entry name" value="F83537"/>
</dbReference>
<dbReference type="RefSeq" id="NP_249556.1">
    <property type="nucleotide sequence ID" value="NC_002516.2"/>
</dbReference>
<dbReference type="SMR" id="Q9I576"/>
<dbReference type="STRING" id="208964.PA0865"/>
<dbReference type="PaxDb" id="208964-PA0865"/>
<dbReference type="GeneID" id="882225"/>
<dbReference type="KEGG" id="pae:PA0865"/>
<dbReference type="PATRIC" id="fig|208964.12.peg.899"/>
<dbReference type="PseudoCAP" id="PA0865"/>
<dbReference type="HOGENOM" id="CLU_034004_1_0_6"/>
<dbReference type="InParanoid" id="Q9I576"/>
<dbReference type="OrthoDB" id="9780241at2"/>
<dbReference type="PhylomeDB" id="Q9I576"/>
<dbReference type="BioCyc" id="PAER208964:G1FZ6-880-MONOMER"/>
<dbReference type="UniPathway" id="UPA00139">
    <property type="reaction ID" value="UER00362"/>
</dbReference>
<dbReference type="Proteomes" id="UP000002438">
    <property type="component" value="Chromosome"/>
</dbReference>
<dbReference type="GO" id="GO:0003868">
    <property type="term" value="F:4-hydroxyphenylpyruvate dioxygenase activity"/>
    <property type="evidence" value="ECO:0000318"/>
    <property type="project" value="GO_Central"/>
</dbReference>
<dbReference type="GO" id="GO:0046872">
    <property type="term" value="F:metal ion binding"/>
    <property type="evidence" value="ECO:0007669"/>
    <property type="project" value="UniProtKB-KW"/>
</dbReference>
<dbReference type="GO" id="GO:0006559">
    <property type="term" value="P:L-phenylalanine catabolic process"/>
    <property type="evidence" value="ECO:0007669"/>
    <property type="project" value="UniProtKB-UniPathway"/>
</dbReference>
<dbReference type="GO" id="GO:0006572">
    <property type="term" value="P:tyrosine catabolic process"/>
    <property type="evidence" value="ECO:0000318"/>
    <property type="project" value="GO_Central"/>
</dbReference>
<dbReference type="CDD" id="cd07250">
    <property type="entry name" value="HPPD_C_like"/>
    <property type="match status" value="1"/>
</dbReference>
<dbReference type="CDD" id="cd08342">
    <property type="entry name" value="HPPD_N_like"/>
    <property type="match status" value="1"/>
</dbReference>
<dbReference type="FunFam" id="3.10.180.10:FF:000007">
    <property type="entry name" value="4-hydroxyphenylpyruvate dioxygenase"/>
    <property type="match status" value="1"/>
</dbReference>
<dbReference type="FunFam" id="3.10.180.10:FF:000018">
    <property type="entry name" value="4-hydroxyphenylpyruvate dioxygenase"/>
    <property type="match status" value="1"/>
</dbReference>
<dbReference type="Gene3D" id="3.10.180.10">
    <property type="entry name" value="2,3-Dihydroxybiphenyl 1,2-Dioxygenase, domain 1"/>
    <property type="match status" value="2"/>
</dbReference>
<dbReference type="InterPro" id="IPR005956">
    <property type="entry name" value="4OHPhenylPyrv_dOase"/>
</dbReference>
<dbReference type="InterPro" id="IPR041735">
    <property type="entry name" value="4OHPhenylPyrv_dOase_C"/>
</dbReference>
<dbReference type="InterPro" id="IPR041736">
    <property type="entry name" value="4OHPhenylPyrv_dOase_N"/>
</dbReference>
<dbReference type="InterPro" id="IPR029068">
    <property type="entry name" value="Glyas_Bleomycin-R_OHBP_Dase"/>
</dbReference>
<dbReference type="InterPro" id="IPR004360">
    <property type="entry name" value="Glyas_Fos-R_dOase_dom"/>
</dbReference>
<dbReference type="InterPro" id="IPR037523">
    <property type="entry name" value="VOC"/>
</dbReference>
<dbReference type="NCBIfam" id="TIGR01263">
    <property type="entry name" value="4HPPD"/>
    <property type="match status" value="1"/>
</dbReference>
<dbReference type="PANTHER" id="PTHR11959">
    <property type="entry name" value="4-HYDROXYPHENYLPYRUVATE DIOXYGENASE"/>
    <property type="match status" value="1"/>
</dbReference>
<dbReference type="PANTHER" id="PTHR11959:SF1">
    <property type="entry name" value="4-HYDROXYPHENYLPYRUVATE DIOXYGENASE"/>
    <property type="match status" value="1"/>
</dbReference>
<dbReference type="Pfam" id="PF00903">
    <property type="entry name" value="Glyoxalase"/>
    <property type="match status" value="1"/>
</dbReference>
<dbReference type="Pfam" id="PF14696">
    <property type="entry name" value="Glyoxalase_5"/>
    <property type="match status" value="1"/>
</dbReference>
<dbReference type="PIRSF" id="PIRSF009283">
    <property type="entry name" value="HPP_dOase"/>
    <property type="match status" value="1"/>
</dbReference>
<dbReference type="SUPFAM" id="SSF54593">
    <property type="entry name" value="Glyoxalase/Bleomycin resistance protein/Dihydroxybiphenyl dioxygenase"/>
    <property type="match status" value="1"/>
</dbReference>
<dbReference type="PROSITE" id="PS51819">
    <property type="entry name" value="VOC"/>
    <property type="match status" value="2"/>
</dbReference>
<reference key="1">
    <citation type="journal article" date="2000" name="Nature">
        <title>Complete genome sequence of Pseudomonas aeruginosa PAO1, an opportunistic pathogen.</title>
        <authorList>
            <person name="Stover C.K."/>
            <person name="Pham X.-Q.T."/>
            <person name="Erwin A.L."/>
            <person name="Mizoguchi S.D."/>
            <person name="Warrener P."/>
            <person name="Hickey M.J."/>
            <person name="Brinkman F.S.L."/>
            <person name="Hufnagle W.O."/>
            <person name="Kowalik D.J."/>
            <person name="Lagrou M."/>
            <person name="Garber R.L."/>
            <person name="Goltry L."/>
            <person name="Tolentino E."/>
            <person name="Westbrock-Wadman S."/>
            <person name="Yuan Y."/>
            <person name="Brody L.L."/>
            <person name="Coulter S.N."/>
            <person name="Folger K.R."/>
            <person name="Kas A."/>
            <person name="Larbig K."/>
            <person name="Lim R.M."/>
            <person name="Smith K.A."/>
            <person name="Spencer D.H."/>
            <person name="Wong G.K.-S."/>
            <person name="Wu Z."/>
            <person name="Paulsen I.T."/>
            <person name="Reizer J."/>
            <person name="Saier M.H. Jr."/>
            <person name="Hancock R.E.W."/>
            <person name="Lory S."/>
            <person name="Olson M.V."/>
        </authorList>
    </citation>
    <scope>NUCLEOTIDE SEQUENCE [LARGE SCALE GENOMIC DNA]</scope>
    <source>
        <strain>ATCC 15692 / DSM 22644 / CIP 104116 / JCM 14847 / LMG 12228 / 1C / PRS 101 / PAO1</strain>
    </source>
</reference>